<gene>
    <name evidence="1" type="primary">thiI</name>
    <name type="ordered locus">TP_0559</name>
</gene>
<evidence type="ECO:0000255" key="1">
    <source>
        <dbReference type="HAMAP-Rule" id="MF_00021"/>
    </source>
</evidence>
<accession>O83570</accession>
<feature type="chain" id="PRO_0000154882" description="Probable tRNA sulfurtransferase">
    <location>
        <begin position="1"/>
        <end position="401"/>
    </location>
</feature>
<feature type="domain" description="THUMP" evidence="1">
    <location>
        <begin position="63"/>
        <end position="168"/>
    </location>
</feature>
<feature type="binding site" evidence="1">
    <location>
        <begin position="186"/>
        <end position="187"/>
    </location>
    <ligand>
        <name>ATP</name>
        <dbReference type="ChEBI" id="CHEBI:30616"/>
    </ligand>
</feature>
<feature type="binding site" evidence="1">
    <location>
        <begin position="211"/>
        <end position="212"/>
    </location>
    <ligand>
        <name>ATP</name>
        <dbReference type="ChEBI" id="CHEBI:30616"/>
    </ligand>
</feature>
<feature type="binding site" evidence="1">
    <location>
        <position position="268"/>
    </location>
    <ligand>
        <name>ATP</name>
        <dbReference type="ChEBI" id="CHEBI:30616"/>
    </ligand>
</feature>
<feature type="binding site" evidence="1">
    <location>
        <position position="290"/>
    </location>
    <ligand>
        <name>ATP</name>
        <dbReference type="ChEBI" id="CHEBI:30616"/>
    </ligand>
</feature>
<feature type="binding site" evidence="1">
    <location>
        <position position="299"/>
    </location>
    <ligand>
        <name>ATP</name>
        <dbReference type="ChEBI" id="CHEBI:30616"/>
    </ligand>
</feature>
<name>THII_TREPA</name>
<organism>
    <name type="scientific">Treponema pallidum (strain Nichols)</name>
    <dbReference type="NCBI Taxonomy" id="243276"/>
    <lineage>
        <taxon>Bacteria</taxon>
        <taxon>Pseudomonadati</taxon>
        <taxon>Spirochaetota</taxon>
        <taxon>Spirochaetia</taxon>
        <taxon>Spirochaetales</taxon>
        <taxon>Treponemataceae</taxon>
        <taxon>Treponema</taxon>
    </lineage>
</organism>
<comment type="function">
    <text evidence="1">Catalyzes the ATP-dependent transfer of a sulfur to tRNA to produce 4-thiouridine in position 8 of tRNAs, which functions as a near-UV photosensor. Also catalyzes the transfer of sulfur to the sulfur carrier protein ThiS, forming ThiS-thiocarboxylate. This is a step in the synthesis of thiazole, in the thiamine biosynthesis pathway. The sulfur is donated as persulfide by IscS.</text>
</comment>
<comment type="catalytic activity">
    <reaction evidence="1">
        <text>[ThiI sulfur-carrier protein]-S-sulfanyl-L-cysteine + a uridine in tRNA + 2 reduced [2Fe-2S]-[ferredoxin] + ATP + H(+) = [ThiI sulfur-carrier protein]-L-cysteine + a 4-thiouridine in tRNA + 2 oxidized [2Fe-2S]-[ferredoxin] + AMP + diphosphate</text>
        <dbReference type="Rhea" id="RHEA:24176"/>
        <dbReference type="Rhea" id="RHEA-COMP:10000"/>
        <dbReference type="Rhea" id="RHEA-COMP:10001"/>
        <dbReference type="Rhea" id="RHEA-COMP:13337"/>
        <dbReference type="Rhea" id="RHEA-COMP:13338"/>
        <dbReference type="Rhea" id="RHEA-COMP:13339"/>
        <dbReference type="Rhea" id="RHEA-COMP:13340"/>
        <dbReference type="ChEBI" id="CHEBI:15378"/>
        <dbReference type="ChEBI" id="CHEBI:29950"/>
        <dbReference type="ChEBI" id="CHEBI:30616"/>
        <dbReference type="ChEBI" id="CHEBI:33019"/>
        <dbReference type="ChEBI" id="CHEBI:33737"/>
        <dbReference type="ChEBI" id="CHEBI:33738"/>
        <dbReference type="ChEBI" id="CHEBI:61963"/>
        <dbReference type="ChEBI" id="CHEBI:65315"/>
        <dbReference type="ChEBI" id="CHEBI:136798"/>
        <dbReference type="ChEBI" id="CHEBI:456215"/>
        <dbReference type="EC" id="2.8.1.4"/>
    </reaction>
</comment>
<comment type="catalytic activity">
    <reaction evidence="1">
        <text>[ThiS sulfur-carrier protein]-C-terminal Gly-Gly-AMP + S-sulfanyl-L-cysteinyl-[cysteine desulfurase] + AH2 = [ThiS sulfur-carrier protein]-C-terminal-Gly-aminoethanethioate + L-cysteinyl-[cysteine desulfurase] + A + AMP + 2 H(+)</text>
        <dbReference type="Rhea" id="RHEA:43340"/>
        <dbReference type="Rhea" id="RHEA-COMP:12157"/>
        <dbReference type="Rhea" id="RHEA-COMP:12158"/>
        <dbReference type="Rhea" id="RHEA-COMP:12910"/>
        <dbReference type="Rhea" id="RHEA-COMP:19908"/>
        <dbReference type="ChEBI" id="CHEBI:13193"/>
        <dbReference type="ChEBI" id="CHEBI:15378"/>
        <dbReference type="ChEBI" id="CHEBI:17499"/>
        <dbReference type="ChEBI" id="CHEBI:29950"/>
        <dbReference type="ChEBI" id="CHEBI:61963"/>
        <dbReference type="ChEBI" id="CHEBI:90618"/>
        <dbReference type="ChEBI" id="CHEBI:232372"/>
        <dbReference type="ChEBI" id="CHEBI:456215"/>
    </reaction>
</comment>
<comment type="pathway">
    <text evidence="1">Cofactor biosynthesis; thiamine diphosphate biosynthesis.</text>
</comment>
<comment type="subcellular location">
    <subcellularLocation>
        <location evidence="1">Cytoplasm</location>
    </subcellularLocation>
</comment>
<comment type="similarity">
    <text evidence="1">Belongs to the ThiI family.</text>
</comment>
<dbReference type="EC" id="2.8.1.4" evidence="1"/>
<dbReference type="EMBL" id="AE000520">
    <property type="protein sequence ID" value="AAC26563.1"/>
    <property type="molecule type" value="Genomic_DNA"/>
</dbReference>
<dbReference type="PIR" id="C71310">
    <property type="entry name" value="C71310"/>
</dbReference>
<dbReference type="RefSeq" id="WP_010882006.1">
    <property type="nucleotide sequence ID" value="NC_021490.2"/>
</dbReference>
<dbReference type="SMR" id="O83570"/>
<dbReference type="IntAct" id="O83570">
    <property type="interactions" value="25"/>
</dbReference>
<dbReference type="STRING" id="243276.TP_0559"/>
<dbReference type="EnsemblBacteria" id="AAC26563">
    <property type="protein sequence ID" value="AAC26563"/>
    <property type="gene ID" value="TP_0559"/>
</dbReference>
<dbReference type="GeneID" id="93876329"/>
<dbReference type="KEGG" id="tpa:TP_0559"/>
<dbReference type="KEGG" id="tpw:TPANIC_0559"/>
<dbReference type="eggNOG" id="COG0301">
    <property type="taxonomic scope" value="Bacteria"/>
</dbReference>
<dbReference type="HOGENOM" id="CLU_037952_4_0_12"/>
<dbReference type="OrthoDB" id="9773948at2"/>
<dbReference type="UniPathway" id="UPA00060"/>
<dbReference type="Proteomes" id="UP000000811">
    <property type="component" value="Chromosome"/>
</dbReference>
<dbReference type="GO" id="GO:0005829">
    <property type="term" value="C:cytosol"/>
    <property type="evidence" value="ECO:0007669"/>
    <property type="project" value="TreeGrafter"/>
</dbReference>
<dbReference type="GO" id="GO:0005524">
    <property type="term" value="F:ATP binding"/>
    <property type="evidence" value="ECO:0007669"/>
    <property type="project" value="UniProtKB-UniRule"/>
</dbReference>
<dbReference type="GO" id="GO:0004810">
    <property type="term" value="F:CCA tRNA nucleotidyltransferase activity"/>
    <property type="evidence" value="ECO:0007669"/>
    <property type="project" value="InterPro"/>
</dbReference>
<dbReference type="GO" id="GO:0000049">
    <property type="term" value="F:tRNA binding"/>
    <property type="evidence" value="ECO:0007669"/>
    <property type="project" value="UniProtKB-UniRule"/>
</dbReference>
<dbReference type="GO" id="GO:0140741">
    <property type="term" value="F:tRNA-uracil-4 sulfurtransferase activity"/>
    <property type="evidence" value="ECO:0007669"/>
    <property type="project" value="UniProtKB-EC"/>
</dbReference>
<dbReference type="GO" id="GO:0009228">
    <property type="term" value="P:thiamine biosynthetic process"/>
    <property type="evidence" value="ECO:0007669"/>
    <property type="project" value="UniProtKB-KW"/>
</dbReference>
<dbReference type="GO" id="GO:0009229">
    <property type="term" value="P:thiamine diphosphate biosynthetic process"/>
    <property type="evidence" value="ECO:0007669"/>
    <property type="project" value="UniProtKB-UniRule"/>
</dbReference>
<dbReference type="GO" id="GO:0052837">
    <property type="term" value="P:thiazole biosynthetic process"/>
    <property type="evidence" value="ECO:0007669"/>
    <property type="project" value="TreeGrafter"/>
</dbReference>
<dbReference type="GO" id="GO:0002937">
    <property type="term" value="P:tRNA 4-thiouridine biosynthesis"/>
    <property type="evidence" value="ECO:0007669"/>
    <property type="project" value="TreeGrafter"/>
</dbReference>
<dbReference type="CDD" id="cd01712">
    <property type="entry name" value="PPase_ThiI"/>
    <property type="match status" value="1"/>
</dbReference>
<dbReference type="CDD" id="cd11716">
    <property type="entry name" value="THUMP_ThiI"/>
    <property type="match status" value="1"/>
</dbReference>
<dbReference type="FunFam" id="3.40.50.620:FF:000053">
    <property type="entry name" value="Probable tRNA sulfurtransferase"/>
    <property type="match status" value="1"/>
</dbReference>
<dbReference type="Gene3D" id="3.30.2130.30">
    <property type="match status" value="1"/>
</dbReference>
<dbReference type="Gene3D" id="3.40.50.620">
    <property type="entry name" value="HUPs"/>
    <property type="match status" value="1"/>
</dbReference>
<dbReference type="HAMAP" id="MF_00021">
    <property type="entry name" value="ThiI"/>
    <property type="match status" value="1"/>
</dbReference>
<dbReference type="InterPro" id="IPR014729">
    <property type="entry name" value="Rossmann-like_a/b/a_fold"/>
</dbReference>
<dbReference type="InterPro" id="IPR020536">
    <property type="entry name" value="ThiI_AANH"/>
</dbReference>
<dbReference type="InterPro" id="IPR054173">
    <property type="entry name" value="ThiI_fer"/>
</dbReference>
<dbReference type="InterPro" id="IPR049961">
    <property type="entry name" value="ThiI_N"/>
</dbReference>
<dbReference type="InterPro" id="IPR004114">
    <property type="entry name" value="THUMP_dom"/>
</dbReference>
<dbReference type="InterPro" id="IPR049962">
    <property type="entry name" value="THUMP_ThiI"/>
</dbReference>
<dbReference type="InterPro" id="IPR003720">
    <property type="entry name" value="tRNA_STrfase"/>
</dbReference>
<dbReference type="InterPro" id="IPR050102">
    <property type="entry name" value="tRNA_sulfurtransferase_ThiI"/>
</dbReference>
<dbReference type="NCBIfam" id="TIGR00342">
    <property type="entry name" value="tRNA uracil 4-sulfurtransferase ThiI"/>
    <property type="match status" value="1"/>
</dbReference>
<dbReference type="PANTHER" id="PTHR43209">
    <property type="entry name" value="TRNA SULFURTRANSFERASE"/>
    <property type="match status" value="1"/>
</dbReference>
<dbReference type="PANTHER" id="PTHR43209:SF1">
    <property type="entry name" value="TRNA SULFURTRANSFERASE"/>
    <property type="match status" value="1"/>
</dbReference>
<dbReference type="Pfam" id="PF02568">
    <property type="entry name" value="ThiI"/>
    <property type="match status" value="1"/>
</dbReference>
<dbReference type="Pfam" id="PF22025">
    <property type="entry name" value="ThiI_fer"/>
    <property type="match status" value="1"/>
</dbReference>
<dbReference type="Pfam" id="PF02926">
    <property type="entry name" value="THUMP"/>
    <property type="match status" value="1"/>
</dbReference>
<dbReference type="SMART" id="SM00981">
    <property type="entry name" value="THUMP"/>
    <property type="match status" value="1"/>
</dbReference>
<dbReference type="SUPFAM" id="SSF52402">
    <property type="entry name" value="Adenine nucleotide alpha hydrolases-like"/>
    <property type="match status" value="1"/>
</dbReference>
<dbReference type="SUPFAM" id="SSF143437">
    <property type="entry name" value="THUMP domain-like"/>
    <property type="match status" value="1"/>
</dbReference>
<dbReference type="PROSITE" id="PS51165">
    <property type="entry name" value="THUMP"/>
    <property type="match status" value="1"/>
</dbReference>
<reference key="1">
    <citation type="journal article" date="1998" name="Science">
        <title>Complete genome sequence of Treponema pallidum, the syphilis spirochete.</title>
        <authorList>
            <person name="Fraser C.M."/>
            <person name="Norris S.J."/>
            <person name="Weinstock G.M."/>
            <person name="White O."/>
            <person name="Sutton G.G."/>
            <person name="Dodson R.J."/>
            <person name="Gwinn M.L."/>
            <person name="Hickey E.K."/>
            <person name="Clayton R.A."/>
            <person name="Ketchum K.A."/>
            <person name="Sodergren E."/>
            <person name="Hardham J.M."/>
            <person name="McLeod M.P."/>
            <person name="Salzberg S.L."/>
            <person name="Peterson J.D."/>
            <person name="Khalak H.G."/>
            <person name="Richardson D.L."/>
            <person name="Howell J.K."/>
            <person name="Chidambaram M."/>
            <person name="Utterback T.R."/>
            <person name="McDonald L.A."/>
            <person name="Artiach P."/>
            <person name="Bowman C."/>
            <person name="Cotton M.D."/>
            <person name="Fujii C."/>
            <person name="Garland S.A."/>
            <person name="Hatch B."/>
            <person name="Horst K."/>
            <person name="Roberts K.M."/>
            <person name="Sandusky M."/>
            <person name="Weidman J.F."/>
            <person name="Smith H.O."/>
            <person name="Venter J.C."/>
        </authorList>
    </citation>
    <scope>NUCLEOTIDE SEQUENCE [LARGE SCALE GENOMIC DNA]</scope>
    <source>
        <strain>Nichols</strain>
    </source>
</reference>
<proteinExistence type="inferred from homology"/>
<sequence length="401" mass="44640">MVNGSTQYLAHVGELSLKKGNRRQFEVQLERNLTLMLRSINPHVTVRAGRLYLSVPASFEAQTTAEQALSYLLGITGWAAATACPKTMEAITRCAHAEATLAAREGKRTFRIEARRADKRFCRTSSEIAREVGAVIHQSGALSVDLHHPDVVIFIEVREREAFLYGARRRGLRGLPCGVSGRGLLLLSGGIDSPVAGYRMLSRGMHIDCLYFHSYPYTPPEAQKKVEDLAKVLARYGLSTTLTVVSLTDIQKQLQTHAPAPSLTLLLRMCMMRIAEHVAREQRARCLITGESLAQVASQTLENLTVTSACTHLPIFRPLIGADKEDIIRTATEIGTYAISIRPYEDCCTLFAPKHPVLRPEVEEMQKQYQSLMLGPLLEDAFRTRKRTRIYGNYGVQESGE</sequence>
<keyword id="KW-0067">ATP-binding</keyword>
<keyword id="KW-0963">Cytoplasm</keyword>
<keyword id="KW-0547">Nucleotide-binding</keyword>
<keyword id="KW-1185">Reference proteome</keyword>
<keyword id="KW-0694">RNA-binding</keyword>
<keyword id="KW-0784">Thiamine biosynthesis</keyword>
<keyword id="KW-0808">Transferase</keyword>
<keyword id="KW-0820">tRNA-binding</keyword>
<protein>
    <recommendedName>
        <fullName evidence="1">Probable tRNA sulfurtransferase</fullName>
        <ecNumber evidence="1">2.8.1.4</ecNumber>
    </recommendedName>
    <alternativeName>
        <fullName evidence="1">Sulfur carrier protein ThiS sulfurtransferase</fullName>
    </alternativeName>
    <alternativeName>
        <fullName evidence="1">Thiamine biosynthesis protein ThiI</fullName>
    </alternativeName>
    <alternativeName>
        <fullName evidence="1">tRNA 4-thiouridine synthase</fullName>
    </alternativeName>
</protein>